<evidence type="ECO:0000255" key="1">
    <source>
        <dbReference type="HAMAP-Rule" id="MF_00050"/>
    </source>
</evidence>
<organism>
    <name type="scientific">Rickettsia rickettsii (strain Iowa)</name>
    <dbReference type="NCBI Taxonomy" id="452659"/>
    <lineage>
        <taxon>Bacteria</taxon>
        <taxon>Pseudomonadati</taxon>
        <taxon>Pseudomonadota</taxon>
        <taxon>Alphaproteobacteria</taxon>
        <taxon>Rickettsiales</taxon>
        <taxon>Rickettsiaceae</taxon>
        <taxon>Rickettsieae</taxon>
        <taxon>Rickettsia</taxon>
        <taxon>spotted fever group</taxon>
    </lineage>
</organism>
<protein>
    <recommendedName>
        <fullName evidence="1">Elongation factor Ts</fullName>
        <shortName evidence="1">EF-Ts</shortName>
    </recommendedName>
</protein>
<feature type="chain" id="PRO_1000074876" description="Elongation factor Ts">
    <location>
        <begin position="1"/>
        <end position="309"/>
    </location>
</feature>
<feature type="region of interest" description="Involved in Mg(2+) ion dislocation from EF-Tu" evidence="1">
    <location>
        <begin position="82"/>
        <end position="85"/>
    </location>
</feature>
<name>EFTS_RICRO</name>
<keyword id="KW-0963">Cytoplasm</keyword>
<keyword id="KW-0251">Elongation factor</keyword>
<keyword id="KW-0648">Protein biosynthesis</keyword>
<accession>B0BW39</accession>
<gene>
    <name evidence="1" type="primary">tsf</name>
    <name type="ordered locus">RrIowa_0146</name>
</gene>
<reference key="1">
    <citation type="journal article" date="2008" name="Infect. Immun.">
        <title>Genomic comparison of virulent Rickettsia rickettsii Sheila Smith and avirulent Rickettsia rickettsii Iowa.</title>
        <authorList>
            <person name="Ellison D.W."/>
            <person name="Clark T.R."/>
            <person name="Sturdevant D.E."/>
            <person name="Virtaneva K."/>
            <person name="Porcella S.F."/>
            <person name="Hackstadt T."/>
        </authorList>
    </citation>
    <scope>NUCLEOTIDE SEQUENCE [LARGE SCALE GENOMIC DNA]</scope>
    <source>
        <strain>Iowa</strain>
    </source>
</reference>
<proteinExistence type="inferred from homology"/>
<dbReference type="EMBL" id="CP000766">
    <property type="protein sequence ID" value="ABY72065.1"/>
    <property type="molecule type" value="Genomic_DNA"/>
</dbReference>
<dbReference type="RefSeq" id="WP_012150338.1">
    <property type="nucleotide sequence ID" value="NC_010263.3"/>
</dbReference>
<dbReference type="SMR" id="B0BW39"/>
<dbReference type="GeneID" id="79936913"/>
<dbReference type="KEGG" id="rrj:RrIowa_0146"/>
<dbReference type="eggNOG" id="COG0264">
    <property type="taxonomic scope" value="Bacteria"/>
</dbReference>
<dbReference type="HOGENOM" id="CLU_047155_2_0_5"/>
<dbReference type="Proteomes" id="UP000000796">
    <property type="component" value="Chromosome"/>
</dbReference>
<dbReference type="GO" id="GO:0005737">
    <property type="term" value="C:cytoplasm"/>
    <property type="evidence" value="ECO:0007669"/>
    <property type="project" value="UniProtKB-SubCell"/>
</dbReference>
<dbReference type="GO" id="GO:0003746">
    <property type="term" value="F:translation elongation factor activity"/>
    <property type="evidence" value="ECO:0007669"/>
    <property type="project" value="UniProtKB-UniRule"/>
</dbReference>
<dbReference type="CDD" id="cd14275">
    <property type="entry name" value="UBA_EF-Ts"/>
    <property type="match status" value="1"/>
</dbReference>
<dbReference type="FunFam" id="1.10.286.20:FF:000001">
    <property type="entry name" value="Elongation factor Ts"/>
    <property type="match status" value="1"/>
</dbReference>
<dbReference type="FunFam" id="1.10.8.10:FF:000001">
    <property type="entry name" value="Elongation factor Ts"/>
    <property type="match status" value="1"/>
</dbReference>
<dbReference type="Gene3D" id="1.10.286.20">
    <property type="match status" value="1"/>
</dbReference>
<dbReference type="Gene3D" id="1.10.8.10">
    <property type="entry name" value="DNA helicase RuvA subunit, C-terminal domain"/>
    <property type="match status" value="1"/>
</dbReference>
<dbReference type="Gene3D" id="3.30.479.20">
    <property type="entry name" value="Elongation factor Ts, dimerisation domain"/>
    <property type="match status" value="2"/>
</dbReference>
<dbReference type="HAMAP" id="MF_00050">
    <property type="entry name" value="EF_Ts"/>
    <property type="match status" value="1"/>
</dbReference>
<dbReference type="InterPro" id="IPR036402">
    <property type="entry name" value="EF-Ts_dimer_sf"/>
</dbReference>
<dbReference type="InterPro" id="IPR001816">
    <property type="entry name" value="Transl_elong_EFTs/EF1B"/>
</dbReference>
<dbReference type="InterPro" id="IPR014039">
    <property type="entry name" value="Transl_elong_EFTs/EF1B_dimer"/>
</dbReference>
<dbReference type="InterPro" id="IPR018101">
    <property type="entry name" value="Transl_elong_Ts_CS"/>
</dbReference>
<dbReference type="InterPro" id="IPR009060">
    <property type="entry name" value="UBA-like_sf"/>
</dbReference>
<dbReference type="NCBIfam" id="TIGR00116">
    <property type="entry name" value="tsf"/>
    <property type="match status" value="1"/>
</dbReference>
<dbReference type="PANTHER" id="PTHR11741">
    <property type="entry name" value="ELONGATION FACTOR TS"/>
    <property type="match status" value="1"/>
</dbReference>
<dbReference type="PANTHER" id="PTHR11741:SF0">
    <property type="entry name" value="ELONGATION FACTOR TS, MITOCHONDRIAL"/>
    <property type="match status" value="1"/>
</dbReference>
<dbReference type="Pfam" id="PF00889">
    <property type="entry name" value="EF_TS"/>
    <property type="match status" value="1"/>
</dbReference>
<dbReference type="SUPFAM" id="SSF54713">
    <property type="entry name" value="Elongation factor Ts (EF-Ts), dimerisation domain"/>
    <property type="match status" value="2"/>
</dbReference>
<dbReference type="SUPFAM" id="SSF46934">
    <property type="entry name" value="UBA-like"/>
    <property type="match status" value="1"/>
</dbReference>
<dbReference type="PROSITE" id="PS01126">
    <property type="entry name" value="EF_TS_1"/>
    <property type="match status" value="1"/>
</dbReference>
<dbReference type="PROSITE" id="PS01127">
    <property type="entry name" value="EF_TS_2"/>
    <property type="match status" value="1"/>
</dbReference>
<comment type="function">
    <text evidence="1">Associates with the EF-Tu.GDP complex and induces the exchange of GDP to GTP. It remains bound to the aminoacyl-tRNA.EF-Tu.GTP complex up to the GTP hydrolysis stage on the ribosome.</text>
</comment>
<comment type="subcellular location">
    <subcellularLocation>
        <location evidence="1">Cytoplasm</location>
    </subcellularLocation>
</comment>
<comment type="similarity">
    <text evidence="1">Belongs to the EF-Ts family.</text>
</comment>
<sequence>MSEINISAVAVKELREKTGAGMMDCKKALIETSGNFEEAIDFLRKKGLAAAAKKAGRIASEGLTAAKVDGLTGVVIEVNSETDFVARNEQFQDLVKEIANLAVIAKTIDTLKTFKMQSGKSVEEEVIENIATIGENLTLRRMDVLEISEGAIGSYVHNEVVPNLGKISVLVGLVSNAKDKAKLEALAKQIAVHVAGNNPQSIDDSSLDQALVERERKVFFEKSKEEGKPDNIIAKMVEGRIRKFFSEVVLLQQNFLFEPKLTVAEVIKNAEKELGAEIKIAKFIRYELGEGIEHEEKNFADEVAAITQG</sequence>